<comment type="function">
    <text evidence="1">Part of the phosphoribosylformylglycinamidine synthase complex involved in the purines biosynthetic pathway. Catalyzes the ATP-dependent conversion of formylglycinamide ribonucleotide (FGAR) and glutamine to yield formylglycinamidine ribonucleotide (FGAM) and glutamate. The FGAM synthase complex is composed of three subunits. PurQ produces an ammonia molecule by converting glutamine to glutamate. PurL transfers the ammonia molecule to FGAR to form FGAM in an ATP-dependent manner. PurS interacts with PurQ and PurL and is thought to assist in the transfer of the ammonia molecule from PurQ to PurL.</text>
</comment>
<comment type="catalytic activity">
    <reaction evidence="1">
        <text>N(2)-formyl-N(1)-(5-phospho-beta-D-ribosyl)glycinamide + L-glutamine + ATP + H2O = 2-formamido-N(1)-(5-O-phospho-beta-D-ribosyl)acetamidine + L-glutamate + ADP + phosphate + H(+)</text>
        <dbReference type="Rhea" id="RHEA:17129"/>
        <dbReference type="ChEBI" id="CHEBI:15377"/>
        <dbReference type="ChEBI" id="CHEBI:15378"/>
        <dbReference type="ChEBI" id="CHEBI:29985"/>
        <dbReference type="ChEBI" id="CHEBI:30616"/>
        <dbReference type="ChEBI" id="CHEBI:43474"/>
        <dbReference type="ChEBI" id="CHEBI:58359"/>
        <dbReference type="ChEBI" id="CHEBI:147286"/>
        <dbReference type="ChEBI" id="CHEBI:147287"/>
        <dbReference type="ChEBI" id="CHEBI:456216"/>
        <dbReference type="EC" id="6.3.5.3"/>
    </reaction>
</comment>
<comment type="catalytic activity">
    <reaction evidence="1">
        <text>L-glutamine + H2O = L-glutamate + NH4(+)</text>
        <dbReference type="Rhea" id="RHEA:15889"/>
        <dbReference type="ChEBI" id="CHEBI:15377"/>
        <dbReference type="ChEBI" id="CHEBI:28938"/>
        <dbReference type="ChEBI" id="CHEBI:29985"/>
        <dbReference type="ChEBI" id="CHEBI:58359"/>
        <dbReference type="EC" id="3.5.1.2"/>
    </reaction>
</comment>
<comment type="pathway">
    <text evidence="1">Purine metabolism; IMP biosynthesis via de novo pathway; 5-amino-1-(5-phospho-D-ribosyl)imidazole from N(2)-formyl-N(1)-(5-phospho-D-ribosyl)glycinamide: step 1/2.</text>
</comment>
<comment type="subunit">
    <text evidence="1">Part of the FGAM synthase complex composed of 1 PurL, 1 PurQ and 2 PurS subunits.</text>
</comment>
<comment type="subcellular location">
    <subcellularLocation>
        <location evidence="1">Cytoplasm</location>
    </subcellularLocation>
</comment>
<keyword id="KW-0067">ATP-binding</keyword>
<keyword id="KW-0963">Cytoplasm</keyword>
<keyword id="KW-0315">Glutamine amidotransferase</keyword>
<keyword id="KW-0378">Hydrolase</keyword>
<keyword id="KW-0436">Ligase</keyword>
<keyword id="KW-0547">Nucleotide-binding</keyword>
<keyword id="KW-0658">Purine biosynthesis</keyword>
<proteinExistence type="inferred from homology"/>
<sequence length="227" mass="25349">MKFAVIVFPGSNCDVDMFHAIKDELGEEVDYVWHDTENLDEYDAILLPGGFSYGDYLRCGAISRFANAMKAVQKAAEQGKPILGVCNGFQILVESGLLPGALIRNENLKFMCRTVQLRVENNETMFTSQYEKDEIINIPIAHGEGNYYCDEATLKQLEENNQIAFRYVENPNGSVSDIAGIVNEKGNVLGMMPHPERAVDELLGGAEGLKVFQSILKQWRETYVVNA</sequence>
<evidence type="ECO:0000255" key="1">
    <source>
        <dbReference type="HAMAP-Rule" id="MF_00421"/>
    </source>
</evidence>
<dbReference type="EC" id="6.3.5.3" evidence="1"/>
<dbReference type="EC" id="3.5.1.2" evidence="1"/>
<dbReference type="EMBL" id="CP001176">
    <property type="protein sequence ID" value="ACK58954.1"/>
    <property type="molecule type" value="Genomic_DNA"/>
</dbReference>
<dbReference type="RefSeq" id="WP_000666774.1">
    <property type="nucleotide sequence ID" value="NC_011725.1"/>
</dbReference>
<dbReference type="SMR" id="B7H4T5"/>
<dbReference type="KEGG" id="bcb:BCB4264_A0339"/>
<dbReference type="HOGENOM" id="CLU_001031_3_1_9"/>
<dbReference type="UniPathway" id="UPA00074">
    <property type="reaction ID" value="UER00128"/>
</dbReference>
<dbReference type="Proteomes" id="UP000007096">
    <property type="component" value="Chromosome"/>
</dbReference>
<dbReference type="GO" id="GO:0005737">
    <property type="term" value="C:cytoplasm"/>
    <property type="evidence" value="ECO:0007669"/>
    <property type="project" value="UniProtKB-SubCell"/>
</dbReference>
<dbReference type="GO" id="GO:0005524">
    <property type="term" value="F:ATP binding"/>
    <property type="evidence" value="ECO:0007669"/>
    <property type="project" value="UniProtKB-KW"/>
</dbReference>
<dbReference type="GO" id="GO:0004359">
    <property type="term" value="F:glutaminase activity"/>
    <property type="evidence" value="ECO:0007669"/>
    <property type="project" value="UniProtKB-EC"/>
</dbReference>
<dbReference type="GO" id="GO:0004642">
    <property type="term" value="F:phosphoribosylformylglycinamidine synthase activity"/>
    <property type="evidence" value="ECO:0007669"/>
    <property type="project" value="UniProtKB-UniRule"/>
</dbReference>
<dbReference type="GO" id="GO:0006189">
    <property type="term" value="P:'de novo' IMP biosynthetic process"/>
    <property type="evidence" value="ECO:0007669"/>
    <property type="project" value="UniProtKB-UniRule"/>
</dbReference>
<dbReference type="CDD" id="cd01740">
    <property type="entry name" value="GATase1_FGAR_AT"/>
    <property type="match status" value="1"/>
</dbReference>
<dbReference type="FunFam" id="3.40.50.880:FF:000019">
    <property type="entry name" value="Phosphoribosylformylglycinamidine synthase subunit PurQ"/>
    <property type="match status" value="1"/>
</dbReference>
<dbReference type="Gene3D" id="3.40.50.880">
    <property type="match status" value="1"/>
</dbReference>
<dbReference type="HAMAP" id="MF_00421">
    <property type="entry name" value="PurQ"/>
    <property type="match status" value="1"/>
</dbReference>
<dbReference type="InterPro" id="IPR029062">
    <property type="entry name" value="Class_I_gatase-like"/>
</dbReference>
<dbReference type="InterPro" id="IPR010075">
    <property type="entry name" value="PRibForGlyAmidine_synth_PurQ"/>
</dbReference>
<dbReference type="NCBIfam" id="TIGR01737">
    <property type="entry name" value="FGAM_synth_I"/>
    <property type="match status" value="1"/>
</dbReference>
<dbReference type="NCBIfam" id="NF002957">
    <property type="entry name" value="PRK03619.1"/>
    <property type="match status" value="1"/>
</dbReference>
<dbReference type="PANTHER" id="PTHR47552">
    <property type="entry name" value="PHOSPHORIBOSYLFORMYLGLYCINAMIDINE SYNTHASE SUBUNIT PURQ"/>
    <property type="match status" value="1"/>
</dbReference>
<dbReference type="PANTHER" id="PTHR47552:SF1">
    <property type="entry name" value="PHOSPHORIBOSYLFORMYLGLYCINAMIDINE SYNTHASE SUBUNIT PURQ"/>
    <property type="match status" value="1"/>
</dbReference>
<dbReference type="Pfam" id="PF13507">
    <property type="entry name" value="GATase_5"/>
    <property type="match status" value="1"/>
</dbReference>
<dbReference type="PIRSF" id="PIRSF001586">
    <property type="entry name" value="FGAM_synth_I"/>
    <property type="match status" value="1"/>
</dbReference>
<dbReference type="SMART" id="SM01211">
    <property type="entry name" value="GATase_5"/>
    <property type="match status" value="1"/>
</dbReference>
<dbReference type="SUPFAM" id="SSF52317">
    <property type="entry name" value="Class I glutamine amidotransferase-like"/>
    <property type="match status" value="1"/>
</dbReference>
<dbReference type="PROSITE" id="PS51273">
    <property type="entry name" value="GATASE_TYPE_1"/>
    <property type="match status" value="1"/>
</dbReference>
<name>PURQ_BACC4</name>
<reference key="1">
    <citation type="submission" date="2008-10" db="EMBL/GenBank/DDBJ databases">
        <title>Genome sequence of Bacillus cereus B4264.</title>
        <authorList>
            <person name="Dodson R.J."/>
            <person name="Durkin A.S."/>
            <person name="Rosovitz M.J."/>
            <person name="Rasko D.A."/>
            <person name="Hoffmaster A."/>
            <person name="Ravel J."/>
            <person name="Sutton G."/>
        </authorList>
    </citation>
    <scope>NUCLEOTIDE SEQUENCE [LARGE SCALE GENOMIC DNA]</scope>
    <source>
        <strain>B4264</strain>
    </source>
</reference>
<accession>B7H4T5</accession>
<gene>
    <name evidence="1" type="primary">purQ</name>
    <name type="ordered locus">BCB4264_A0339</name>
</gene>
<feature type="chain" id="PRO_1000194846" description="Phosphoribosylformylglycinamidine synthase subunit PurQ">
    <location>
        <begin position="1"/>
        <end position="227"/>
    </location>
</feature>
<feature type="domain" description="Glutamine amidotransferase type-1" evidence="1">
    <location>
        <begin position="3"/>
        <end position="225"/>
    </location>
</feature>
<feature type="active site" description="Nucleophile" evidence="1">
    <location>
        <position position="86"/>
    </location>
</feature>
<feature type="active site" evidence="1">
    <location>
        <position position="194"/>
    </location>
</feature>
<feature type="active site" evidence="1">
    <location>
        <position position="196"/>
    </location>
</feature>
<protein>
    <recommendedName>
        <fullName evidence="1">Phosphoribosylformylglycinamidine synthase subunit PurQ</fullName>
        <shortName evidence="1">FGAM synthase</shortName>
        <ecNumber evidence="1">6.3.5.3</ecNumber>
    </recommendedName>
    <alternativeName>
        <fullName evidence="1">Formylglycinamide ribonucleotide amidotransferase subunit I</fullName>
        <shortName evidence="1">FGAR amidotransferase I</shortName>
        <shortName evidence="1">FGAR-AT I</shortName>
    </alternativeName>
    <alternativeName>
        <fullName evidence="1">Glutaminase PurQ</fullName>
        <ecNumber evidence="1">3.5.1.2</ecNumber>
    </alternativeName>
    <alternativeName>
        <fullName evidence="1">Phosphoribosylformylglycinamidine synthase subunit I</fullName>
    </alternativeName>
</protein>
<organism>
    <name type="scientific">Bacillus cereus (strain B4264)</name>
    <dbReference type="NCBI Taxonomy" id="405532"/>
    <lineage>
        <taxon>Bacteria</taxon>
        <taxon>Bacillati</taxon>
        <taxon>Bacillota</taxon>
        <taxon>Bacilli</taxon>
        <taxon>Bacillales</taxon>
        <taxon>Bacillaceae</taxon>
        <taxon>Bacillus</taxon>
        <taxon>Bacillus cereus group</taxon>
    </lineage>
</organism>